<comment type="function">
    <text evidence="1">Transcription factor that plays a role in the activation of archaeal genes transcribed by RNA polymerase. Facilitates transcription initiation by enhancing TATA-box recognition by TATA-box-binding protein (Tbp), and transcription factor B (Tfb) and RNA polymerase recruitment. Not absolutely required for transcription in vitro, but particularly important in cases where Tbp or Tfb function is not optimal. It dynamically alters the nucleic acid-binding properties of RNA polymerases by stabilizing the initiation complex and destabilizing elongation complexes. Seems to translocate with the RNA polymerase following initiation and acts by binding to the non template strand of the transcription bubble in elongation complexes.</text>
</comment>
<comment type="subunit">
    <text evidence="1">Monomer. Interaction with RNA polymerase subunits RpoF and RpoE is necessary for Tfe stimulatory transcription activity. Able to interact with Tbp and RNA polymerase in the absence of DNA promoter. Interacts both with the preinitiation and elongation complexes.</text>
</comment>
<comment type="domain">
    <text evidence="1">The winged helix domain is involved in binding to DNA in the preinitiation complex.</text>
</comment>
<comment type="similarity">
    <text evidence="1">Belongs to the TFE family.</text>
</comment>
<gene>
    <name evidence="1" type="primary">tfe</name>
    <name type="ordered locus">NEQ482</name>
</gene>
<evidence type="ECO:0000255" key="1">
    <source>
        <dbReference type="HAMAP-Rule" id="MF_01909"/>
    </source>
</evidence>
<organism>
    <name type="scientific">Nanoarchaeum equitans (strain Kin4-M)</name>
    <dbReference type="NCBI Taxonomy" id="228908"/>
    <lineage>
        <taxon>Archaea</taxon>
        <taxon>Nanobdellota</taxon>
        <taxon>Candidatus Nanoarchaeia</taxon>
        <taxon>Nanoarchaeales</taxon>
        <taxon>Nanoarchaeaceae</taxon>
        <taxon>Nanoarchaeum</taxon>
    </lineage>
</organism>
<dbReference type="EMBL" id="AE017199">
    <property type="protein sequence ID" value="AAR39325.1"/>
    <property type="molecule type" value="Genomic_DNA"/>
</dbReference>
<dbReference type="SMR" id="Q74MZ3"/>
<dbReference type="STRING" id="228908.NEQ482"/>
<dbReference type="EnsemblBacteria" id="AAR39325">
    <property type="protein sequence ID" value="AAR39325"/>
    <property type="gene ID" value="NEQ482"/>
</dbReference>
<dbReference type="KEGG" id="neq:NEQ482"/>
<dbReference type="HOGENOM" id="CLU_100097_0_0_2"/>
<dbReference type="Proteomes" id="UP000000578">
    <property type="component" value="Chromosome"/>
</dbReference>
<dbReference type="GO" id="GO:0003677">
    <property type="term" value="F:DNA binding"/>
    <property type="evidence" value="ECO:0007669"/>
    <property type="project" value="UniProtKB-KW"/>
</dbReference>
<dbReference type="GO" id="GO:0006355">
    <property type="term" value="P:regulation of DNA-templated transcription"/>
    <property type="evidence" value="ECO:0007669"/>
    <property type="project" value="InterPro"/>
</dbReference>
<dbReference type="GO" id="GO:0006367">
    <property type="term" value="P:transcription initiation at RNA polymerase II promoter"/>
    <property type="evidence" value="ECO:0007669"/>
    <property type="project" value="InterPro"/>
</dbReference>
<dbReference type="Gene3D" id="1.10.10.10">
    <property type="entry name" value="Winged helix-like DNA-binding domain superfamily/Winged helix DNA-binding domain"/>
    <property type="match status" value="1"/>
</dbReference>
<dbReference type="HAMAP" id="MF_01909">
    <property type="entry name" value="TFE_arch"/>
    <property type="match status" value="1"/>
</dbReference>
<dbReference type="InterPro" id="IPR016481">
    <property type="entry name" value="TF_E_archaea"/>
</dbReference>
<dbReference type="InterPro" id="IPR017919">
    <property type="entry name" value="TFIIE/TFIIEa_HTH"/>
</dbReference>
<dbReference type="InterPro" id="IPR002853">
    <property type="entry name" value="TFIIE_asu"/>
</dbReference>
<dbReference type="InterPro" id="IPR024550">
    <property type="entry name" value="TFIIEa/SarR/Rpc3_HTH_dom"/>
</dbReference>
<dbReference type="InterPro" id="IPR036388">
    <property type="entry name" value="WH-like_DNA-bd_sf"/>
</dbReference>
<dbReference type="InterPro" id="IPR036390">
    <property type="entry name" value="WH_DNA-bd_sf"/>
</dbReference>
<dbReference type="Pfam" id="PF02002">
    <property type="entry name" value="TFIIE_alpha"/>
    <property type="match status" value="1"/>
</dbReference>
<dbReference type="PIRSF" id="PIRSF006373">
    <property type="entry name" value="TF_E_archaea"/>
    <property type="match status" value="1"/>
</dbReference>
<dbReference type="SMART" id="SM00531">
    <property type="entry name" value="TFIIE"/>
    <property type="match status" value="1"/>
</dbReference>
<dbReference type="SUPFAM" id="SSF46785">
    <property type="entry name" value="Winged helix' DNA-binding domain"/>
    <property type="match status" value="1"/>
</dbReference>
<dbReference type="PROSITE" id="PS51344">
    <property type="entry name" value="HTH_TFE_IIE"/>
    <property type="match status" value="1"/>
</dbReference>
<proteinExistence type="inferred from homology"/>
<keyword id="KW-0238">DNA-binding</keyword>
<keyword id="KW-1185">Reference proteome</keyword>
<keyword id="KW-0804">Transcription</keyword>
<keyword id="KW-0805">Transcription regulation</keyword>
<reference key="1">
    <citation type="journal article" date="2003" name="Proc. Natl. Acad. Sci. U.S.A.">
        <title>The genome of Nanoarchaeum equitans: insights into early archaeal evolution and derived parasitism.</title>
        <authorList>
            <person name="Waters E."/>
            <person name="Hohn M.J."/>
            <person name="Ahel I."/>
            <person name="Graham D.E."/>
            <person name="Adams M.D."/>
            <person name="Barnstead M."/>
            <person name="Beeson K.Y."/>
            <person name="Bibbs L."/>
            <person name="Bolanos R."/>
            <person name="Keller M."/>
            <person name="Kretz K."/>
            <person name="Lin X."/>
            <person name="Mathur E."/>
            <person name="Ni J."/>
            <person name="Podar M."/>
            <person name="Richardson T."/>
            <person name="Sutton G.G."/>
            <person name="Simon M."/>
            <person name="Soell D."/>
            <person name="Stetter K.O."/>
            <person name="Short J.M."/>
            <person name="Noorderwier M."/>
        </authorList>
    </citation>
    <scope>NUCLEOTIDE SEQUENCE [LARGE SCALE GENOMIC DNA]</scope>
    <source>
        <strain>Kin4-M</strain>
    </source>
</reference>
<feature type="chain" id="PRO_0000326613" description="Transcription factor E">
    <location>
        <begin position="1"/>
        <end position="139"/>
    </location>
</feature>
<feature type="domain" description="HTH TFE/IIEalpha-type" evidence="1">
    <location>
        <begin position="7"/>
        <end position="91"/>
    </location>
</feature>
<name>TFE_NANEQ</name>
<sequence>MPTSKQIINKKQDEVSDIYGKEMIRVIRSLLKHKIIDTESLSKKTGYSINTVRRALYTLQKMGIVRYINKEDKTLWQLLETDYEKILDTLLEPYKKEEKAETGELLFICPKCGRKYTLDEAEMYEFRCPEDGTLLVANQ</sequence>
<accession>Q74MZ3</accession>
<protein>
    <recommendedName>
        <fullName evidence="1">Transcription factor E</fullName>
        <shortName evidence="1">TFE</shortName>
    </recommendedName>
    <alternativeName>
        <fullName evidence="1">TFIIE subunit alpha homolog</fullName>
    </alternativeName>
    <alternativeName>
        <fullName evidence="1">Transcription initiation factor TFIIE</fullName>
    </alternativeName>
</protein>